<dbReference type="EC" id="4.1.99.22" evidence="1"/>
<dbReference type="EMBL" id="CP000510">
    <property type="protein sequence ID" value="ABM03918.1"/>
    <property type="molecule type" value="Genomic_DNA"/>
</dbReference>
<dbReference type="SMR" id="A1SWQ3"/>
<dbReference type="STRING" id="357804.Ping_2177"/>
<dbReference type="KEGG" id="pin:Ping_2177"/>
<dbReference type="eggNOG" id="COG2896">
    <property type="taxonomic scope" value="Bacteria"/>
</dbReference>
<dbReference type="HOGENOM" id="CLU_009273_0_1_6"/>
<dbReference type="UniPathway" id="UPA00344"/>
<dbReference type="Proteomes" id="UP000000639">
    <property type="component" value="Chromosome"/>
</dbReference>
<dbReference type="GO" id="GO:0051539">
    <property type="term" value="F:4 iron, 4 sulfur cluster binding"/>
    <property type="evidence" value="ECO:0007669"/>
    <property type="project" value="UniProtKB-UniRule"/>
</dbReference>
<dbReference type="GO" id="GO:0061799">
    <property type="term" value="F:cyclic pyranopterin monophosphate synthase activity"/>
    <property type="evidence" value="ECO:0007669"/>
    <property type="project" value="TreeGrafter"/>
</dbReference>
<dbReference type="GO" id="GO:0061798">
    <property type="term" value="F:GTP 3',8'-cyclase activity"/>
    <property type="evidence" value="ECO:0007669"/>
    <property type="project" value="UniProtKB-UniRule"/>
</dbReference>
<dbReference type="GO" id="GO:0005525">
    <property type="term" value="F:GTP binding"/>
    <property type="evidence" value="ECO:0007669"/>
    <property type="project" value="UniProtKB-UniRule"/>
</dbReference>
<dbReference type="GO" id="GO:0046872">
    <property type="term" value="F:metal ion binding"/>
    <property type="evidence" value="ECO:0007669"/>
    <property type="project" value="UniProtKB-KW"/>
</dbReference>
<dbReference type="GO" id="GO:1904047">
    <property type="term" value="F:S-adenosyl-L-methionine binding"/>
    <property type="evidence" value="ECO:0007669"/>
    <property type="project" value="UniProtKB-UniRule"/>
</dbReference>
<dbReference type="GO" id="GO:0006777">
    <property type="term" value="P:Mo-molybdopterin cofactor biosynthetic process"/>
    <property type="evidence" value="ECO:0007669"/>
    <property type="project" value="UniProtKB-UniRule"/>
</dbReference>
<dbReference type="CDD" id="cd01335">
    <property type="entry name" value="Radical_SAM"/>
    <property type="match status" value="1"/>
</dbReference>
<dbReference type="CDD" id="cd21117">
    <property type="entry name" value="Twitch_MoaA"/>
    <property type="match status" value="1"/>
</dbReference>
<dbReference type="FunFam" id="3.20.20.70:FF:000057">
    <property type="entry name" value="GTP 3',8-cyclase"/>
    <property type="match status" value="1"/>
</dbReference>
<dbReference type="Gene3D" id="3.20.20.70">
    <property type="entry name" value="Aldolase class I"/>
    <property type="match status" value="1"/>
</dbReference>
<dbReference type="HAMAP" id="MF_01225_B">
    <property type="entry name" value="MoaA_B"/>
    <property type="match status" value="1"/>
</dbReference>
<dbReference type="InterPro" id="IPR013785">
    <property type="entry name" value="Aldolase_TIM"/>
</dbReference>
<dbReference type="InterPro" id="IPR006638">
    <property type="entry name" value="Elp3/MiaA/NifB-like_rSAM"/>
</dbReference>
<dbReference type="InterPro" id="IPR013483">
    <property type="entry name" value="MoaA"/>
</dbReference>
<dbReference type="InterPro" id="IPR010505">
    <property type="entry name" value="MoaA_twitch"/>
</dbReference>
<dbReference type="InterPro" id="IPR050105">
    <property type="entry name" value="MoCo_biosynth_MoaA/MoaC"/>
</dbReference>
<dbReference type="InterPro" id="IPR007197">
    <property type="entry name" value="rSAM"/>
</dbReference>
<dbReference type="NCBIfam" id="TIGR02666">
    <property type="entry name" value="moaA"/>
    <property type="match status" value="1"/>
</dbReference>
<dbReference type="PANTHER" id="PTHR22960:SF28">
    <property type="entry name" value="GTP 3',8-CYCLASE"/>
    <property type="match status" value="1"/>
</dbReference>
<dbReference type="PANTHER" id="PTHR22960">
    <property type="entry name" value="MOLYBDOPTERIN COFACTOR SYNTHESIS PROTEIN A"/>
    <property type="match status" value="1"/>
</dbReference>
<dbReference type="Pfam" id="PF13353">
    <property type="entry name" value="Fer4_12"/>
    <property type="match status" value="1"/>
</dbReference>
<dbReference type="Pfam" id="PF06463">
    <property type="entry name" value="Mob_synth_C"/>
    <property type="match status" value="1"/>
</dbReference>
<dbReference type="Pfam" id="PF04055">
    <property type="entry name" value="Radical_SAM"/>
    <property type="match status" value="1"/>
</dbReference>
<dbReference type="SFLD" id="SFLDG01383">
    <property type="entry name" value="cyclic_pyranopterin_phosphate"/>
    <property type="match status" value="1"/>
</dbReference>
<dbReference type="SFLD" id="SFLDS00029">
    <property type="entry name" value="Radical_SAM"/>
    <property type="match status" value="1"/>
</dbReference>
<dbReference type="SMART" id="SM00729">
    <property type="entry name" value="Elp3"/>
    <property type="match status" value="1"/>
</dbReference>
<dbReference type="SUPFAM" id="SSF102114">
    <property type="entry name" value="Radical SAM enzymes"/>
    <property type="match status" value="1"/>
</dbReference>
<dbReference type="PROSITE" id="PS51918">
    <property type="entry name" value="RADICAL_SAM"/>
    <property type="match status" value="1"/>
</dbReference>
<name>MOAA_PSYIN</name>
<comment type="function">
    <text evidence="1">Catalyzes the cyclization of GTP to (8S)-3',8-cyclo-7,8-dihydroguanosine 5'-triphosphate.</text>
</comment>
<comment type="catalytic activity">
    <reaction evidence="1">
        <text>GTP + AH2 + S-adenosyl-L-methionine = (8S)-3',8-cyclo-7,8-dihydroguanosine 5'-triphosphate + 5'-deoxyadenosine + L-methionine + A + H(+)</text>
        <dbReference type="Rhea" id="RHEA:49576"/>
        <dbReference type="ChEBI" id="CHEBI:13193"/>
        <dbReference type="ChEBI" id="CHEBI:15378"/>
        <dbReference type="ChEBI" id="CHEBI:17319"/>
        <dbReference type="ChEBI" id="CHEBI:17499"/>
        <dbReference type="ChEBI" id="CHEBI:37565"/>
        <dbReference type="ChEBI" id="CHEBI:57844"/>
        <dbReference type="ChEBI" id="CHEBI:59789"/>
        <dbReference type="ChEBI" id="CHEBI:131766"/>
        <dbReference type="EC" id="4.1.99.22"/>
    </reaction>
</comment>
<comment type="cofactor">
    <cofactor evidence="1">
        <name>[4Fe-4S] cluster</name>
        <dbReference type="ChEBI" id="CHEBI:49883"/>
    </cofactor>
    <text evidence="1">Binds 2 [4Fe-4S] clusters. Binds 1 [4Fe-4S] cluster coordinated with 3 cysteines and an exchangeable S-adenosyl-L-methionine and 1 [4Fe-4S] cluster coordinated with 3 cysteines and the GTP-derived substrate.</text>
</comment>
<comment type="pathway">
    <text evidence="1">Cofactor biosynthesis; molybdopterin biosynthesis.</text>
</comment>
<comment type="subunit">
    <text evidence="1">Monomer and homodimer.</text>
</comment>
<comment type="similarity">
    <text evidence="1">Belongs to the radical SAM superfamily. MoaA family.</text>
</comment>
<accession>A1SWQ3</accession>
<organism>
    <name type="scientific">Psychromonas ingrahamii (strain DSM 17664 / CCUG 51855 / 37)</name>
    <dbReference type="NCBI Taxonomy" id="357804"/>
    <lineage>
        <taxon>Bacteria</taxon>
        <taxon>Pseudomonadati</taxon>
        <taxon>Pseudomonadota</taxon>
        <taxon>Gammaproteobacteria</taxon>
        <taxon>Alteromonadales</taxon>
        <taxon>Psychromonadaceae</taxon>
        <taxon>Psychromonas</taxon>
    </lineage>
</organism>
<proteinExistence type="inferred from homology"/>
<evidence type="ECO:0000255" key="1">
    <source>
        <dbReference type="HAMAP-Rule" id="MF_01225"/>
    </source>
</evidence>
<evidence type="ECO:0000255" key="2">
    <source>
        <dbReference type="PROSITE-ProRule" id="PRU01266"/>
    </source>
</evidence>
<sequence>MSLPPVFGKELNMSQQLIDNFDRKFEYLRLSITDVCNFKCNYCLPDGYQRTHEKQFLSKQEITNLVNAFAELGAKKVRITGGEPALRKDFPKIIEAIATIPGIQKVATTTNGYNLSSHAQAWFDAGLDSINVSVDSLDAKTFHLITGKNIFQKVMQGVNASVKAGFKQVKINSVLMKGLNDIDIDLYINWIKDQPIQLRFIELMQTEDNGEFFNKHHLSGEWIKQNLLENGWTQKQSLSHDGPAQIFYHPDYLGEIGLIMPYSKDFCKSCNRLRVSSVGRLHLCLFGEEGVDLRDLLGTSADKEKLKQRIVESLKSKKVSHYLADGESGGTPHLASIGG</sequence>
<feature type="chain" id="PRO_1000085706" description="GTP 3',8-cyclase">
    <location>
        <begin position="1"/>
        <end position="339"/>
    </location>
</feature>
<feature type="domain" description="Radical SAM core" evidence="2">
    <location>
        <begin position="20"/>
        <end position="241"/>
    </location>
</feature>
<feature type="binding site" evidence="1">
    <location>
        <position position="29"/>
    </location>
    <ligand>
        <name>GTP</name>
        <dbReference type="ChEBI" id="CHEBI:37565"/>
    </ligand>
</feature>
<feature type="binding site" evidence="1">
    <location>
        <position position="36"/>
    </location>
    <ligand>
        <name>[4Fe-4S] cluster</name>
        <dbReference type="ChEBI" id="CHEBI:49883"/>
        <label>1</label>
        <note>4Fe-4S-S-AdoMet</note>
    </ligand>
</feature>
<feature type="binding site" evidence="1">
    <location>
        <position position="40"/>
    </location>
    <ligand>
        <name>[4Fe-4S] cluster</name>
        <dbReference type="ChEBI" id="CHEBI:49883"/>
        <label>1</label>
        <note>4Fe-4S-S-AdoMet</note>
    </ligand>
</feature>
<feature type="binding site" evidence="1">
    <location>
        <position position="42"/>
    </location>
    <ligand>
        <name>S-adenosyl-L-methionine</name>
        <dbReference type="ChEBI" id="CHEBI:59789"/>
    </ligand>
</feature>
<feature type="binding site" evidence="1">
    <location>
        <position position="43"/>
    </location>
    <ligand>
        <name>[4Fe-4S] cluster</name>
        <dbReference type="ChEBI" id="CHEBI:49883"/>
        <label>1</label>
        <note>4Fe-4S-S-AdoMet</note>
    </ligand>
</feature>
<feature type="binding site" evidence="1">
    <location>
        <position position="78"/>
    </location>
    <ligand>
        <name>GTP</name>
        <dbReference type="ChEBI" id="CHEBI:37565"/>
    </ligand>
</feature>
<feature type="binding site" evidence="1">
    <location>
        <position position="82"/>
    </location>
    <ligand>
        <name>S-adenosyl-L-methionine</name>
        <dbReference type="ChEBI" id="CHEBI:59789"/>
    </ligand>
</feature>
<feature type="binding site" evidence="1">
    <location>
        <position position="109"/>
    </location>
    <ligand>
        <name>GTP</name>
        <dbReference type="ChEBI" id="CHEBI:37565"/>
    </ligand>
</feature>
<feature type="binding site" evidence="1">
    <location>
        <position position="133"/>
    </location>
    <ligand>
        <name>S-adenosyl-L-methionine</name>
        <dbReference type="ChEBI" id="CHEBI:59789"/>
    </ligand>
</feature>
<feature type="binding site" evidence="1">
    <location>
        <position position="170"/>
    </location>
    <ligand>
        <name>GTP</name>
        <dbReference type="ChEBI" id="CHEBI:37565"/>
    </ligand>
</feature>
<feature type="binding site" evidence="1">
    <location>
        <position position="204"/>
    </location>
    <ligand>
        <name>S-adenosyl-L-methionine</name>
        <dbReference type="ChEBI" id="CHEBI:59789"/>
    </ligand>
</feature>
<feature type="binding site" evidence="1">
    <location>
        <position position="267"/>
    </location>
    <ligand>
        <name>[4Fe-4S] cluster</name>
        <dbReference type="ChEBI" id="CHEBI:49883"/>
        <label>2</label>
        <note>4Fe-4S-substrate</note>
    </ligand>
</feature>
<feature type="binding site" evidence="1">
    <location>
        <position position="270"/>
    </location>
    <ligand>
        <name>[4Fe-4S] cluster</name>
        <dbReference type="ChEBI" id="CHEBI:49883"/>
        <label>2</label>
        <note>4Fe-4S-substrate</note>
    </ligand>
</feature>
<feature type="binding site" evidence="1">
    <location>
        <begin position="272"/>
        <end position="274"/>
    </location>
    <ligand>
        <name>GTP</name>
        <dbReference type="ChEBI" id="CHEBI:37565"/>
    </ligand>
</feature>
<feature type="binding site" evidence="1">
    <location>
        <position position="284"/>
    </location>
    <ligand>
        <name>[4Fe-4S] cluster</name>
        <dbReference type="ChEBI" id="CHEBI:49883"/>
        <label>2</label>
        <note>4Fe-4S-substrate</note>
    </ligand>
</feature>
<protein>
    <recommendedName>
        <fullName evidence="1">GTP 3',8-cyclase</fullName>
        <ecNumber evidence="1">4.1.99.22</ecNumber>
    </recommendedName>
    <alternativeName>
        <fullName evidence="1">Molybdenum cofactor biosynthesis protein A</fullName>
    </alternativeName>
</protein>
<reference key="1">
    <citation type="journal article" date="2008" name="BMC Genomics">
        <title>Genomics of an extreme psychrophile, Psychromonas ingrahamii.</title>
        <authorList>
            <person name="Riley M."/>
            <person name="Staley J.T."/>
            <person name="Danchin A."/>
            <person name="Wang T.Z."/>
            <person name="Brettin T.S."/>
            <person name="Hauser L.J."/>
            <person name="Land M.L."/>
            <person name="Thompson L.S."/>
        </authorList>
    </citation>
    <scope>NUCLEOTIDE SEQUENCE [LARGE SCALE GENOMIC DNA]</scope>
    <source>
        <strain>DSM 17664 / CCUG 51855 / 37</strain>
    </source>
</reference>
<gene>
    <name evidence="1" type="primary">moaA</name>
    <name type="ordered locus">Ping_2177</name>
</gene>
<keyword id="KW-0004">4Fe-4S</keyword>
<keyword id="KW-0342">GTP-binding</keyword>
<keyword id="KW-0408">Iron</keyword>
<keyword id="KW-0411">Iron-sulfur</keyword>
<keyword id="KW-0456">Lyase</keyword>
<keyword id="KW-0479">Metal-binding</keyword>
<keyword id="KW-0501">Molybdenum cofactor biosynthesis</keyword>
<keyword id="KW-0547">Nucleotide-binding</keyword>
<keyword id="KW-1185">Reference proteome</keyword>
<keyword id="KW-0949">S-adenosyl-L-methionine</keyword>